<organism>
    <name type="scientific">Yarrowia lipolytica (strain CLIB 122 / E 150)</name>
    <name type="common">Yeast</name>
    <name type="synonym">Candida lipolytica</name>
    <dbReference type="NCBI Taxonomy" id="284591"/>
    <lineage>
        <taxon>Eukaryota</taxon>
        <taxon>Fungi</taxon>
        <taxon>Dikarya</taxon>
        <taxon>Ascomycota</taxon>
        <taxon>Saccharomycotina</taxon>
        <taxon>Dipodascomycetes</taxon>
        <taxon>Dipodascales</taxon>
        <taxon>Dipodascales incertae sedis</taxon>
        <taxon>Yarrowia</taxon>
    </lineage>
</organism>
<sequence>MSDTPSSPFIEHPETPRKALFSSNRPSPVRSTHATPSLHGTPSTASRFSRTPREDVIGLKKTISQLRYDLEALKQEQQVAQILQEEKERELEAKHKKELDRAEQAESDQVFLFNKQKELSDENRTLKEELRSLQSQHEADGRELNHELEGLKDLLNDLQSENRALVSEMNYKIEDYEHRIKAASTTTDDLLKEVENRGTALTEAKMNVVKFEQLVESLKGESLDLKQSAKDLEAVEQTKSQLSDQIKYSRELEAKVSALTVRVEAAESAQQLSQVYEEDLSSMKGKLKNMEGLRQQLAEQQLQILVHEENSAKWKAYLEKSDEFKTVEEVVTALNKARMEKASLLERAGSGVNDETRSTAEAYARLQERVTTLESELQLAQNQLKTEKKKVATSIRQHTLAANEAKFLREQLKAYDDEEVTAAGADVKQGRIDELEKLLEAVKNEKSVLEGELKEARSEQGCTVAAGTKRPRADDSVSSEVISEYTRKLQTLQQEFDEVSVEARLLAKTKEALEARLESLEKSQESRVRILELRENPTSRHEAVKQSMLDTLKAENEALMGKNENSKSVPQASLERKQLELQGVRDKLASTEKSYQRLKEVFSVKSLEFREAVYALTGYQIDILRNKKVKVTSMYAQSDEDSFTFLPDPNHKGQFAGVIDSPLTDEFSNIVDYWVKDKKDFPCFLAALNLELYERKENNGNQAS</sequence>
<reference key="1">
    <citation type="journal article" date="2004" name="Nature">
        <title>Genome evolution in yeasts.</title>
        <authorList>
            <person name="Dujon B."/>
            <person name="Sherman D."/>
            <person name="Fischer G."/>
            <person name="Durrens P."/>
            <person name="Casaregola S."/>
            <person name="Lafontaine I."/>
            <person name="de Montigny J."/>
            <person name="Marck C."/>
            <person name="Neuveglise C."/>
            <person name="Talla E."/>
            <person name="Goffard N."/>
            <person name="Frangeul L."/>
            <person name="Aigle M."/>
            <person name="Anthouard V."/>
            <person name="Babour A."/>
            <person name="Barbe V."/>
            <person name="Barnay S."/>
            <person name="Blanchin S."/>
            <person name="Beckerich J.-M."/>
            <person name="Beyne E."/>
            <person name="Bleykasten C."/>
            <person name="Boisrame A."/>
            <person name="Boyer J."/>
            <person name="Cattolico L."/>
            <person name="Confanioleri F."/>
            <person name="de Daruvar A."/>
            <person name="Despons L."/>
            <person name="Fabre E."/>
            <person name="Fairhead C."/>
            <person name="Ferry-Dumazet H."/>
            <person name="Groppi A."/>
            <person name="Hantraye F."/>
            <person name="Hennequin C."/>
            <person name="Jauniaux N."/>
            <person name="Joyet P."/>
            <person name="Kachouri R."/>
            <person name="Kerrest A."/>
            <person name="Koszul R."/>
            <person name="Lemaire M."/>
            <person name="Lesur I."/>
            <person name="Ma L."/>
            <person name="Muller H."/>
            <person name="Nicaud J.-M."/>
            <person name="Nikolski M."/>
            <person name="Oztas S."/>
            <person name="Ozier-Kalogeropoulos O."/>
            <person name="Pellenz S."/>
            <person name="Potier S."/>
            <person name="Richard G.-F."/>
            <person name="Straub M.-L."/>
            <person name="Suleau A."/>
            <person name="Swennen D."/>
            <person name="Tekaia F."/>
            <person name="Wesolowski-Louvel M."/>
            <person name="Westhof E."/>
            <person name="Wirth B."/>
            <person name="Zeniou-Meyer M."/>
            <person name="Zivanovic Y."/>
            <person name="Bolotin-Fukuhara M."/>
            <person name="Thierry A."/>
            <person name="Bouchier C."/>
            <person name="Caudron B."/>
            <person name="Scarpelli C."/>
            <person name="Gaillardin C."/>
            <person name="Weissenbach J."/>
            <person name="Wincker P."/>
            <person name="Souciet J.-L."/>
        </authorList>
    </citation>
    <scope>NUCLEOTIDE SEQUENCE [LARGE SCALE GENOMIC DNA]</scope>
    <source>
        <strain>CLIB 122 / E 150</strain>
    </source>
</reference>
<feature type="chain" id="PRO_0000213797" description="Spindle assembly checkpoint component MAD1">
    <location>
        <begin position="1"/>
        <end position="704"/>
    </location>
</feature>
<feature type="region of interest" description="Disordered" evidence="3">
    <location>
        <begin position="1"/>
        <end position="53"/>
    </location>
</feature>
<feature type="coiled-coil region" evidence="2">
    <location>
        <begin position="53"/>
        <end position="603"/>
    </location>
</feature>
<feature type="compositionally biased region" description="Polar residues" evidence="3">
    <location>
        <begin position="21"/>
        <end position="49"/>
    </location>
</feature>
<proteinExistence type="inferred from homology"/>
<name>MAD1_YARLI</name>
<accession>Q6C452</accession>
<evidence type="ECO:0000250" key="1"/>
<evidence type="ECO:0000255" key="2"/>
<evidence type="ECO:0000256" key="3">
    <source>
        <dbReference type="SAM" id="MobiDB-lite"/>
    </source>
</evidence>
<evidence type="ECO:0000305" key="4"/>
<comment type="function">
    <text>Central component of the spindle assembly checkpoint.</text>
</comment>
<comment type="subcellular location">
    <subcellularLocation>
        <location evidence="1">Nucleus</location>
    </subcellularLocation>
</comment>
<comment type="similarity">
    <text evidence="4">Belongs to the MAD1 family.</text>
</comment>
<gene>
    <name type="primary">MAD1</name>
    <name type="ordered locus">YALI0E29623g</name>
</gene>
<keyword id="KW-0131">Cell cycle</keyword>
<keyword id="KW-0132">Cell division</keyword>
<keyword id="KW-0175">Coiled coil</keyword>
<keyword id="KW-0498">Mitosis</keyword>
<keyword id="KW-0539">Nucleus</keyword>
<keyword id="KW-1185">Reference proteome</keyword>
<protein>
    <recommendedName>
        <fullName>Spindle assembly checkpoint component MAD1</fullName>
    </recommendedName>
    <alternativeName>
        <fullName>Mitotic arrest deficient protein 1</fullName>
    </alternativeName>
</protein>
<dbReference type="EMBL" id="CR382131">
    <property type="protein sequence ID" value="CAG80164.1"/>
    <property type="molecule type" value="Genomic_DNA"/>
</dbReference>
<dbReference type="RefSeq" id="XP_504560.1">
    <property type="nucleotide sequence ID" value="XM_504560.1"/>
</dbReference>
<dbReference type="SMR" id="Q6C452"/>
<dbReference type="FunCoup" id="Q6C452">
    <property type="interactions" value="284"/>
</dbReference>
<dbReference type="STRING" id="284591.Q6C452"/>
<dbReference type="EnsemblFungi" id="CAG80164">
    <property type="protein sequence ID" value="CAG80164"/>
    <property type="gene ID" value="YALI0_E29623g"/>
</dbReference>
<dbReference type="KEGG" id="yli:2911916"/>
<dbReference type="VEuPathDB" id="FungiDB:YALI0_E29623g"/>
<dbReference type="HOGENOM" id="CLU_010064_1_0_1"/>
<dbReference type="InParanoid" id="Q6C452"/>
<dbReference type="OMA" id="YKLDFMP"/>
<dbReference type="OrthoDB" id="9618at4891"/>
<dbReference type="Proteomes" id="UP000001300">
    <property type="component" value="Chromosome E"/>
</dbReference>
<dbReference type="GO" id="GO:0000776">
    <property type="term" value="C:kinetochore"/>
    <property type="evidence" value="ECO:0000318"/>
    <property type="project" value="GO_Central"/>
</dbReference>
<dbReference type="GO" id="GO:0072686">
    <property type="term" value="C:mitotic spindle"/>
    <property type="evidence" value="ECO:0000318"/>
    <property type="project" value="GO_Central"/>
</dbReference>
<dbReference type="GO" id="GO:0005635">
    <property type="term" value="C:nuclear envelope"/>
    <property type="evidence" value="ECO:0000318"/>
    <property type="project" value="GO_Central"/>
</dbReference>
<dbReference type="GO" id="GO:0051315">
    <property type="term" value="P:attachment of mitotic spindle microtubules to kinetochore"/>
    <property type="evidence" value="ECO:0000318"/>
    <property type="project" value="GO_Central"/>
</dbReference>
<dbReference type="GO" id="GO:0051301">
    <property type="term" value="P:cell division"/>
    <property type="evidence" value="ECO:0007669"/>
    <property type="project" value="UniProtKB-KW"/>
</dbReference>
<dbReference type="GO" id="GO:0007094">
    <property type="term" value="P:mitotic spindle assembly checkpoint signaling"/>
    <property type="evidence" value="ECO:0000318"/>
    <property type="project" value="GO_Central"/>
</dbReference>
<dbReference type="Gene3D" id="1.20.5.170">
    <property type="match status" value="1"/>
</dbReference>
<dbReference type="Gene3D" id="3.30.457.60">
    <property type="match status" value="1"/>
</dbReference>
<dbReference type="Gene3D" id="6.10.250.90">
    <property type="match status" value="1"/>
</dbReference>
<dbReference type="InterPro" id="IPR008672">
    <property type="entry name" value="Mad1"/>
</dbReference>
<dbReference type="PANTHER" id="PTHR23168:SF0">
    <property type="entry name" value="MITOTIC SPINDLE ASSEMBLY CHECKPOINT PROTEIN MAD1"/>
    <property type="match status" value="1"/>
</dbReference>
<dbReference type="PANTHER" id="PTHR23168">
    <property type="entry name" value="MITOTIC SPINDLE ASSEMBLY CHECKPOINT PROTEIN MAD1 MITOTIC ARREST DEFICIENT-LIKE PROTEIN 1"/>
    <property type="match status" value="1"/>
</dbReference>
<dbReference type="Pfam" id="PF05557">
    <property type="entry name" value="MAD"/>
    <property type="match status" value="1"/>
</dbReference>
<dbReference type="SUPFAM" id="SSF75704">
    <property type="entry name" value="Mitotic arrest deficient-like 1, Mad1"/>
    <property type="match status" value="1"/>
</dbReference>